<accession>B7NHX4</accession>
<sequence length="219" mass="22860">MTQDELKKAVGWAALQYVQPGTIVGVGTGSTAAHFIDALGTMKGQIEGAVSSSDASTEKLKSLGIHVFDLNEVDSLGIYVDGADEINGHMQMIKGGGAALTREKIIASVAEKFICIADASKQVDILGKFPLPVEVIPMARSAVARQLVKLGGRPEYRQGVVTDNGNVILDVHGMEILDPIAMENAINAIPGVVTVGLFANRGADVALIGTPDGVKTIVK</sequence>
<dbReference type="EC" id="5.3.1.6" evidence="1"/>
<dbReference type="EMBL" id="CU928164">
    <property type="protein sequence ID" value="CAR19446.1"/>
    <property type="molecule type" value="Genomic_DNA"/>
</dbReference>
<dbReference type="RefSeq" id="WP_000189743.1">
    <property type="nucleotide sequence ID" value="NC_011750.1"/>
</dbReference>
<dbReference type="RefSeq" id="YP_002409250.1">
    <property type="nucleotide sequence ID" value="NC_011750.1"/>
</dbReference>
<dbReference type="SMR" id="B7NHX4"/>
<dbReference type="STRING" id="585057.ECIAI39_3329"/>
<dbReference type="GeneID" id="93779085"/>
<dbReference type="KEGG" id="ect:ECIAI39_3329"/>
<dbReference type="PATRIC" id="fig|585057.6.peg.3453"/>
<dbReference type="HOGENOM" id="CLU_056590_1_1_6"/>
<dbReference type="UniPathway" id="UPA00115">
    <property type="reaction ID" value="UER00412"/>
</dbReference>
<dbReference type="Proteomes" id="UP000000749">
    <property type="component" value="Chromosome"/>
</dbReference>
<dbReference type="GO" id="GO:0005829">
    <property type="term" value="C:cytosol"/>
    <property type="evidence" value="ECO:0007669"/>
    <property type="project" value="TreeGrafter"/>
</dbReference>
<dbReference type="GO" id="GO:0004751">
    <property type="term" value="F:ribose-5-phosphate isomerase activity"/>
    <property type="evidence" value="ECO:0007669"/>
    <property type="project" value="UniProtKB-UniRule"/>
</dbReference>
<dbReference type="GO" id="GO:0006014">
    <property type="term" value="P:D-ribose metabolic process"/>
    <property type="evidence" value="ECO:0007669"/>
    <property type="project" value="TreeGrafter"/>
</dbReference>
<dbReference type="GO" id="GO:0009052">
    <property type="term" value="P:pentose-phosphate shunt, non-oxidative branch"/>
    <property type="evidence" value="ECO:0007669"/>
    <property type="project" value="UniProtKB-UniRule"/>
</dbReference>
<dbReference type="CDD" id="cd01398">
    <property type="entry name" value="RPI_A"/>
    <property type="match status" value="1"/>
</dbReference>
<dbReference type="FunFam" id="3.30.70.260:FF:000004">
    <property type="entry name" value="Ribose-5-phosphate isomerase A"/>
    <property type="match status" value="1"/>
</dbReference>
<dbReference type="FunFam" id="3.40.50.1360:FF:000001">
    <property type="entry name" value="Ribose-5-phosphate isomerase A"/>
    <property type="match status" value="1"/>
</dbReference>
<dbReference type="Gene3D" id="3.30.70.260">
    <property type="match status" value="1"/>
</dbReference>
<dbReference type="Gene3D" id="3.40.50.1360">
    <property type="match status" value="1"/>
</dbReference>
<dbReference type="HAMAP" id="MF_00170">
    <property type="entry name" value="Rib_5P_isom_A"/>
    <property type="match status" value="1"/>
</dbReference>
<dbReference type="InterPro" id="IPR037171">
    <property type="entry name" value="NagB/RpiA_transferase-like"/>
</dbReference>
<dbReference type="InterPro" id="IPR020672">
    <property type="entry name" value="Ribose5P_isomerase_typA_subgr"/>
</dbReference>
<dbReference type="InterPro" id="IPR004788">
    <property type="entry name" value="Ribose5P_isomerase_type_A"/>
</dbReference>
<dbReference type="NCBIfam" id="NF001924">
    <property type="entry name" value="PRK00702.1"/>
    <property type="match status" value="1"/>
</dbReference>
<dbReference type="NCBIfam" id="TIGR00021">
    <property type="entry name" value="rpiA"/>
    <property type="match status" value="1"/>
</dbReference>
<dbReference type="PANTHER" id="PTHR11934">
    <property type="entry name" value="RIBOSE-5-PHOSPHATE ISOMERASE"/>
    <property type="match status" value="1"/>
</dbReference>
<dbReference type="PANTHER" id="PTHR11934:SF0">
    <property type="entry name" value="RIBOSE-5-PHOSPHATE ISOMERASE"/>
    <property type="match status" value="1"/>
</dbReference>
<dbReference type="Pfam" id="PF06026">
    <property type="entry name" value="Rib_5-P_isom_A"/>
    <property type="match status" value="1"/>
</dbReference>
<dbReference type="SUPFAM" id="SSF75445">
    <property type="entry name" value="D-ribose-5-phosphate isomerase (RpiA), lid domain"/>
    <property type="match status" value="1"/>
</dbReference>
<dbReference type="SUPFAM" id="SSF100950">
    <property type="entry name" value="NagB/RpiA/CoA transferase-like"/>
    <property type="match status" value="1"/>
</dbReference>
<protein>
    <recommendedName>
        <fullName evidence="1">Ribose-5-phosphate isomerase A</fullName>
        <ecNumber evidence="1">5.3.1.6</ecNumber>
    </recommendedName>
    <alternativeName>
        <fullName evidence="1">Phosphoriboisomerase A</fullName>
        <shortName evidence="1">PRI</shortName>
    </alternativeName>
</protein>
<organism>
    <name type="scientific">Escherichia coli O7:K1 (strain IAI39 / ExPEC)</name>
    <dbReference type="NCBI Taxonomy" id="585057"/>
    <lineage>
        <taxon>Bacteria</taxon>
        <taxon>Pseudomonadati</taxon>
        <taxon>Pseudomonadota</taxon>
        <taxon>Gammaproteobacteria</taxon>
        <taxon>Enterobacterales</taxon>
        <taxon>Enterobacteriaceae</taxon>
        <taxon>Escherichia</taxon>
    </lineage>
</organism>
<comment type="function">
    <text evidence="1">Catalyzes the reversible conversion of ribose-5-phosphate to ribulose 5-phosphate.</text>
</comment>
<comment type="catalytic activity">
    <reaction evidence="1">
        <text>aldehydo-D-ribose 5-phosphate = D-ribulose 5-phosphate</text>
        <dbReference type="Rhea" id="RHEA:14657"/>
        <dbReference type="ChEBI" id="CHEBI:58121"/>
        <dbReference type="ChEBI" id="CHEBI:58273"/>
        <dbReference type="EC" id="5.3.1.6"/>
    </reaction>
</comment>
<comment type="pathway">
    <text evidence="1">Carbohydrate degradation; pentose phosphate pathway; D-ribose 5-phosphate from D-ribulose 5-phosphate (non-oxidative stage): step 1/1.</text>
</comment>
<comment type="subunit">
    <text evidence="1">Homodimer.</text>
</comment>
<comment type="similarity">
    <text evidence="1">Belongs to the ribose 5-phosphate isomerase family.</text>
</comment>
<feature type="chain" id="PRO_1000194707" description="Ribose-5-phosphate isomerase A">
    <location>
        <begin position="1"/>
        <end position="219"/>
    </location>
</feature>
<feature type="active site" description="Proton acceptor" evidence="1">
    <location>
        <position position="103"/>
    </location>
</feature>
<feature type="binding site" evidence="1">
    <location>
        <begin position="28"/>
        <end position="31"/>
    </location>
    <ligand>
        <name>substrate</name>
    </ligand>
</feature>
<feature type="binding site" evidence="1">
    <location>
        <begin position="81"/>
        <end position="84"/>
    </location>
    <ligand>
        <name>substrate</name>
    </ligand>
</feature>
<feature type="binding site" evidence="1">
    <location>
        <begin position="94"/>
        <end position="97"/>
    </location>
    <ligand>
        <name>substrate</name>
    </ligand>
</feature>
<feature type="binding site" evidence="1">
    <location>
        <position position="121"/>
    </location>
    <ligand>
        <name>substrate</name>
    </ligand>
</feature>
<reference key="1">
    <citation type="journal article" date="2009" name="PLoS Genet.">
        <title>Organised genome dynamics in the Escherichia coli species results in highly diverse adaptive paths.</title>
        <authorList>
            <person name="Touchon M."/>
            <person name="Hoede C."/>
            <person name="Tenaillon O."/>
            <person name="Barbe V."/>
            <person name="Baeriswyl S."/>
            <person name="Bidet P."/>
            <person name="Bingen E."/>
            <person name="Bonacorsi S."/>
            <person name="Bouchier C."/>
            <person name="Bouvet O."/>
            <person name="Calteau A."/>
            <person name="Chiapello H."/>
            <person name="Clermont O."/>
            <person name="Cruveiller S."/>
            <person name="Danchin A."/>
            <person name="Diard M."/>
            <person name="Dossat C."/>
            <person name="Karoui M.E."/>
            <person name="Frapy E."/>
            <person name="Garry L."/>
            <person name="Ghigo J.M."/>
            <person name="Gilles A.M."/>
            <person name="Johnson J."/>
            <person name="Le Bouguenec C."/>
            <person name="Lescat M."/>
            <person name="Mangenot S."/>
            <person name="Martinez-Jehanne V."/>
            <person name="Matic I."/>
            <person name="Nassif X."/>
            <person name="Oztas S."/>
            <person name="Petit M.A."/>
            <person name="Pichon C."/>
            <person name="Rouy Z."/>
            <person name="Ruf C.S."/>
            <person name="Schneider D."/>
            <person name="Tourret J."/>
            <person name="Vacherie B."/>
            <person name="Vallenet D."/>
            <person name="Medigue C."/>
            <person name="Rocha E.P.C."/>
            <person name="Denamur E."/>
        </authorList>
    </citation>
    <scope>NUCLEOTIDE SEQUENCE [LARGE SCALE GENOMIC DNA]</scope>
    <source>
        <strain>IAI39 / ExPEC</strain>
    </source>
</reference>
<gene>
    <name evidence="1" type="primary">rpiA</name>
    <name type="ordered locus">ECIAI39_3329</name>
</gene>
<name>RPIA_ECO7I</name>
<keyword id="KW-0413">Isomerase</keyword>
<proteinExistence type="inferred from homology"/>
<evidence type="ECO:0000255" key="1">
    <source>
        <dbReference type="HAMAP-Rule" id="MF_00170"/>
    </source>
</evidence>